<comment type="similarity">
    <text evidence="1">Belongs to the bacterial ribosomal protein bL33 family.</text>
</comment>
<comment type="sequence caution" evidence="2">
    <conflict type="erroneous initiation">
        <sequence resource="EMBL-CDS" id="CAI27669"/>
    </conflict>
</comment>
<organism>
    <name type="scientific">Ehrlichia ruminantium (strain Gardel)</name>
    <dbReference type="NCBI Taxonomy" id="302409"/>
    <lineage>
        <taxon>Bacteria</taxon>
        <taxon>Pseudomonadati</taxon>
        <taxon>Pseudomonadota</taxon>
        <taxon>Alphaproteobacteria</taxon>
        <taxon>Rickettsiales</taxon>
        <taxon>Anaplasmataceae</taxon>
        <taxon>Ehrlichia</taxon>
    </lineage>
</organism>
<gene>
    <name evidence="1" type="primary">rpmG</name>
    <name type="ordered locus">ERGA_CDS_02170</name>
</gene>
<proteinExistence type="inferred from homology"/>
<keyword id="KW-0687">Ribonucleoprotein</keyword>
<keyword id="KW-0689">Ribosomal protein</keyword>
<accession>Q5FFJ4</accession>
<feature type="chain" id="PRO_0000356454" description="Large ribosomal subunit protein bL33">
    <location>
        <begin position="1"/>
        <end position="56"/>
    </location>
</feature>
<reference key="1">
    <citation type="journal article" date="2006" name="J. Bacteriol.">
        <title>Comparative genomic analysis of three strains of Ehrlichia ruminantium reveals an active process of genome size plasticity.</title>
        <authorList>
            <person name="Frutos R."/>
            <person name="Viari A."/>
            <person name="Ferraz C."/>
            <person name="Morgat A."/>
            <person name="Eychenie S."/>
            <person name="Kandassamy Y."/>
            <person name="Chantal I."/>
            <person name="Bensaid A."/>
            <person name="Coissac E."/>
            <person name="Vachiery N."/>
            <person name="Demaille J."/>
            <person name="Martinez D."/>
        </authorList>
    </citation>
    <scope>NUCLEOTIDE SEQUENCE [LARGE SCALE GENOMIC DNA]</scope>
    <source>
        <strain>Gardel</strain>
    </source>
</reference>
<protein>
    <recommendedName>
        <fullName evidence="1">Large ribosomal subunit protein bL33</fullName>
    </recommendedName>
    <alternativeName>
        <fullName evidence="2">50S ribosomal protein L33</fullName>
    </alternativeName>
</protein>
<dbReference type="EMBL" id="CR925677">
    <property type="protein sequence ID" value="CAI27669.1"/>
    <property type="status" value="ALT_INIT"/>
    <property type="molecule type" value="Genomic_DNA"/>
</dbReference>
<dbReference type="RefSeq" id="WP_011154905.1">
    <property type="nucleotide sequence ID" value="NC_006831.1"/>
</dbReference>
<dbReference type="SMR" id="Q5FFJ4"/>
<dbReference type="GeneID" id="33058363"/>
<dbReference type="KEGG" id="erg:ERGA_CDS_02170"/>
<dbReference type="HOGENOM" id="CLU_190949_1_0_5"/>
<dbReference type="OrthoDB" id="21586at2"/>
<dbReference type="Proteomes" id="UP000000533">
    <property type="component" value="Chromosome"/>
</dbReference>
<dbReference type="GO" id="GO:0005737">
    <property type="term" value="C:cytoplasm"/>
    <property type="evidence" value="ECO:0007669"/>
    <property type="project" value="UniProtKB-ARBA"/>
</dbReference>
<dbReference type="GO" id="GO:0015934">
    <property type="term" value="C:large ribosomal subunit"/>
    <property type="evidence" value="ECO:0007669"/>
    <property type="project" value="TreeGrafter"/>
</dbReference>
<dbReference type="GO" id="GO:0003735">
    <property type="term" value="F:structural constituent of ribosome"/>
    <property type="evidence" value="ECO:0007669"/>
    <property type="project" value="InterPro"/>
</dbReference>
<dbReference type="GO" id="GO:0006412">
    <property type="term" value="P:translation"/>
    <property type="evidence" value="ECO:0007669"/>
    <property type="project" value="UniProtKB-UniRule"/>
</dbReference>
<dbReference type="Gene3D" id="2.20.28.120">
    <property type="entry name" value="Ribosomal protein L33"/>
    <property type="match status" value="1"/>
</dbReference>
<dbReference type="HAMAP" id="MF_00294">
    <property type="entry name" value="Ribosomal_bL33"/>
    <property type="match status" value="1"/>
</dbReference>
<dbReference type="InterPro" id="IPR001705">
    <property type="entry name" value="Ribosomal_bL33"/>
</dbReference>
<dbReference type="InterPro" id="IPR038584">
    <property type="entry name" value="Ribosomal_bL33_sf"/>
</dbReference>
<dbReference type="InterPro" id="IPR011332">
    <property type="entry name" value="Ribosomal_zn-bd"/>
</dbReference>
<dbReference type="NCBIfam" id="NF001860">
    <property type="entry name" value="PRK00595.1"/>
    <property type="match status" value="1"/>
</dbReference>
<dbReference type="NCBIfam" id="TIGR01023">
    <property type="entry name" value="rpmG_bact"/>
    <property type="match status" value="1"/>
</dbReference>
<dbReference type="PANTHER" id="PTHR15238">
    <property type="entry name" value="54S RIBOSOMAL PROTEIN L39, MITOCHONDRIAL"/>
    <property type="match status" value="1"/>
</dbReference>
<dbReference type="PANTHER" id="PTHR15238:SF1">
    <property type="entry name" value="LARGE RIBOSOMAL SUBUNIT PROTEIN BL33M"/>
    <property type="match status" value="1"/>
</dbReference>
<dbReference type="Pfam" id="PF00471">
    <property type="entry name" value="Ribosomal_L33"/>
    <property type="match status" value="1"/>
</dbReference>
<dbReference type="SUPFAM" id="SSF57829">
    <property type="entry name" value="Zn-binding ribosomal proteins"/>
    <property type="match status" value="1"/>
</dbReference>
<name>RL33_EHRRG</name>
<sequence>MAKRGSTLLVKLASSAGTGYFYVKKRNPKKLINKLSFRKYDPVARKHVLFTEEKLR</sequence>
<evidence type="ECO:0000255" key="1">
    <source>
        <dbReference type="HAMAP-Rule" id="MF_00294"/>
    </source>
</evidence>
<evidence type="ECO:0000305" key="2"/>